<reference key="1">
    <citation type="journal article" date="2011" name="J. Bacteriol.">
        <title>Whole-genome sequences of thirteen isolates of Borrelia burgdorferi.</title>
        <authorList>
            <person name="Schutzer S.E."/>
            <person name="Fraser-Liggett C.M."/>
            <person name="Casjens S.R."/>
            <person name="Qiu W.G."/>
            <person name="Dunn J.J."/>
            <person name="Mongodin E.F."/>
            <person name="Luft B.J."/>
        </authorList>
    </citation>
    <scope>NUCLEOTIDE SEQUENCE [LARGE SCALE GENOMIC DNA]</scope>
    <source>
        <strain>ZS7</strain>
    </source>
</reference>
<proteinExistence type="inferred from homology"/>
<name>NAGB_BORBZ</name>
<comment type="function">
    <text evidence="1">Catalyzes the reversible isomerization-deamination of glucosamine 6-phosphate (GlcN6P) to form fructose 6-phosphate (Fru6P) and ammonium ion.</text>
</comment>
<comment type="catalytic activity">
    <reaction evidence="1">
        <text>alpha-D-glucosamine 6-phosphate + H2O = beta-D-fructose 6-phosphate + NH4(+)</text>
        <dbReference type="Rhea" id="RHEA:12172"/>
        <dbReference type="ChEBI" id="CHEBI:15377"/>
        <dbReference type="ChEBI" id="CHEBI:28938"/>
        <dbReference type="ChEBI" id="CHEBI:57634"/>
        <dbReference type="ChEBI" id="CHEBI:75989"/>
        <dbReference type="EC" id="3.5.99.6"/>
    </reaction>
</comment>
<comment type="activity regulation">
    <text evidence="1">Allosterically activated by N-acetylglucosamine 6-phosphate (GlcNAc6P).</text>
</comment>
<comment type="pathway">
    <text evidence="1">Amino-sugar metabolism; N-acetylneuraminate degradation; D-fructose 6-phosphate from N-acetylneuraminate: step 5/5.</text>
</comment>
<comment type="similarity">
    <text evidence="1">Belongs to the glucosamine/galactosamine-6-phosphate isomerase family. NagB subfamily.</text>
</comment>
<gene>
    <name evidence="1" type="primary">nagB</name>
    <name type="ordered locus">BbuZS7_0150</name>
</gene>
<sequence length="268" mass="30358">MRLIIRPTYEDISKWAANHVAQKINEFSPTKENPFILGLPTGSSPIGMYKNLIELNKNKKISFQNVITFNMDEYIGIEENHPESYHSFMWNNFFSHIDIKKENINILNGNASNLKKECEEYEKKIKSFGGIMLFVGGIGPDGHIAFNEPGSSLTSRTRIKTLTQDTIIANSRFFEGDVNKVPKNALTVGIGTIMDSQEVLIIVNGHNKARALKHAIEKGVNHMWTISALQLHKNAIIVSDKNATYELKVGTVEYFNDIERKNFNNDLK</sequence>
<accession>B7J183</accession>
<organism>
    <name type="scientific">Borreliella burgdorferi (strain ZS7)</name>
    <name type="common">Borrelia burgdorferi</name>
    <dbReference type="NCBI Taxonomy" id="445985"/>
    <lineage>
        <taxon>Bacteria</taxon>
        <taxon>Pseudomonadati</taxon>
        <taxon>Spirochaetota</taxon>
        <taxon>Spirochaetia</taxon>
        <taxon>Spirochaetales</taxon>
        <taxon>Borreliaceae</taxon>
        <taxon>Borreliella</taxon>
    </lineage>
</organism>
<protein>
    <recommendedName>
        <fullName evidence="1">Glucosamine-6-phosphate deaminase</fullName>
        <ecNumber evidence="1">3.5.99.6</ecNumber>
    </recommendedName>
    <alternativeName>
        <fullName evidence="1">GlcN6P deaminase</fullName>
        <shortName evidence="1">GNPDA</shortName>
    </alternativeName>
    <alternativeName>
        <fullName evidence="1">Glucosamine-6-phosphate isomerase</fullName>
    </alternativeName>
</protein>
<evidence type="ECO:0000255" key="1">
    <source>
        <dbReference type="HAMAP-Rule" id="MF_01241"/>
    </source>
</evidence>
<feature type="chain" id="PRO_1000139760" description="Glucosamine-6-phosphate deaminase">
    <location>
        <begin position="1"/>
        <end position="268"/>
    </location>
</feature>
<feature type="active site" description="Proton acceptor; for enolization step" evidence="1">
    <location>
        <position position="72"/>
    </location>
</feature>
<feature type="active site" description="For ring-opening step" evidence="1">
    <location>
        <position position="141"/>
    </location>
</feature>
<feature type="active site" description="Proton acceptor; for ring-opening step" evidence="1">
    <location>
        <position position="143"/>
    </location>
</feature>
<feature type="active site" description="For ring-opening step" evidence="1">
    <location>
        <position position="148"/>
    </location>
</feature>
<feature type="site" description="Part of the allosteric site" evidence="1">
    <location>
        <position position="151"/>
    </location>
</feature>
<feature type="site" description="Part of the allosteric site" evidence="1">
    <location>
        <position position="158"/>
    </location>
</feature>
<feature type="site" description="Part of the allosteric site" evidence="1">
    <location>
        <position position="160"/>
    </location>
</feature>
<feature type="site" description="Part of the allosteric site" evidence="1">
    <location>
        <position position="161"/>
    </location>
</feature>
<feature type="site" description="Part of the allosteric site" evidence="1">
    <location>
        <position position="254"/>
    </location>
</feature>
<dbReference type="EC" id="3.5.99.6" evidence="1"/>
<dbReference type="EMBL" id="CP001205">
    <property type="protein sequence ID" value="ACK74846.1"/>
    <property type="molecule type" value="Genomic_DNA"/>
</dbReference>
<dbReference type="RefSeq" id="WP_002556751.1">
    <property type="nucleotide sequence ID" value="NC_011728.1"/>
</dbReference>
<dbReference type="SMR" id="B7J183"/>
<dbReference type="GeneID" id="56568068"/>
<dbReference type="KEGG" id="bbz:BbuZS7_0150"/>
<dbReference type="HOGENOM" id="CLU_049611_0_1_12"/>
<dbReference type="UniPathway" id="UPA00629">
    <property type="reaction ID" value="UER00684"/>
</dbReference>
<dbReference type="Proteomes" id="UP000006901">
    <property type="component" value="Chromosome"/>
</dbReference>
<dbReference type="GO" id="GO:0005737">
    <property type="term" value="C:cytoplasm"/>
    <property type="evidence" value="ECO:0007669"/>
    <property type="project" value="TreeGrafter"/>
</dbReference>
<dbReference type="GO" id="GO:0004342">
    <property type="term" value="F:glucosamine-6-phosphate deaminase activity"/>
    <property type="evidence" value="ECO:0007669"/>
    <property type="project" value="UniProtKB-UniRule"/>
</dbReference>
<dbReference type="GO" id="GO:0042802">
    <property type="term" value="F:identical protein binding"/>
    <property type="evidence" value="ECO:0007669"/>
    <property type="project" value="TreeGrafter"/>
</dbReference>
<dbReference type="GO" id="GO:0005975">
    <property type="term" value="P:carbohydrate metabolic process"/>
    <property type="evidence" value="ECO:0007669"/>
    <property type="project" value="InterPro"/>
</dbReference>
<dbReference type="GO" id="GO:0006043">
    <property type="term" value="P:glucosamine catabolic process"/>
    <property type="evidence" value="ECO:0007669"/>
    <property type="project" value="TreeGrafter"/>
</dbReference>
<dbReference type="GO" id="GO:0006046">
    <property type="term" value="P:N-acetylglucosamine catabolic process"/>
    <property type="evidence" value="ECO:0007669"/>
    <property type="project" value="TreeGrafter"/>
</dbReference>
<dbReference type="GO" id="GO:0019262">
    <property type="term" value="P:N-acetylneuraminate catabolic process"/>
    <property type="evidence" value="ECO:0007669"/>
    <property type="project" value="UniProtKB-UniRule"/>
</dbReference>
<dbReference type="CDD" id="cd01399">
    <property type="entry name" value="GlcN6P_deaminase"/>
    <property type="match status" value="1"/>
</dbReference>
<dbReference type="FunFam" id="3.40.50.1360:FF:000002">
    <property type="entry name" value="Glucosamine-6-phosphate deaminase"/>
    <property type="match status" value="1"/>
</dbReference>
<dbReference type="Gene3D" id="3.40.50.1360">
    <property type="match status" value="1"/>
</dbReference>
<dbReference type="HAMAP" id="MF_01241">
    <property type="entry name" value="GlcN6P_deamin"/>
    <property type="match status" value="1"/>
</dbReference>
<dbReference type="InterPro" id="IPR006148">
    <property type="entry name" value="Glc/Gal-6P_isomerase"/>
</dbReference>
<dbReference type="InterPro" id="IPR004547">
    <property type="entry name" value="Glucosamine6P_isomerase"/>
</dbReference>
<dbReference type="InterPro" id="IPR018321">
    <property type="entry name" value="Glucosamine6P_isomerase_CS"/>
</dbReference>
<dbReference type="InterPro" id="IPR037171">
    <property type="entry name" value="NagB/RpiA_transferase-like"/>
</dbReference>
<dbReference type="NCBIfam" id="TIGR00502">
    <property type="entry name" value="nagB"/>
    <property type="match status" value="1"/>
</dbReference>
<dbReference type="PANTHER" id="PTHR11280">
    <property type="entry name" value="GLUCOSAMINE-6-PHOSPHATE ISOMERASE"/>
    <property type="match status" value="1"/>
</dbReference>
<dbReference type="PANTHER" id="PTHR11280:SF5">
    <property type="entry name" value="GLUCOSAMINE-6-PHOSPHATE ISOMERASE"/>
    <property type="match status" value="1"/>
</dbReference>
<dbReference type="Pfam" id="PF01182">
    <property type="entry name" value="Glucosamine_iso"/>
    <property type="match status" value="1"/>
</dbReference>
<dbReference type="SUPFAM" id="SSF100950">
    <property type="entry name" value="NagB/RpiA/CoA transferase-like"/>
    <property type="match status" value="1"/>
</dbReference>
<dbReference type="PROSITE" id="PS01161">
    <property type="entry name" value="GLC_GALNAC_ISOMERASE"/>
    <property type="match status" value="1"/>
</dbReference>
<keyword id="KW-0021">Allosteric enzyme</keyword>
<keyword id="KW-0119">Carbohydrate metabolism</keyword>
<keyword id="KW-0378">Hydrolase</keyword>